<dbReference type="EMBL" id="AABR07004507">
    <property type="status" value="NOT_ANNOTATED_CDS"/>
    <property type="molecule type" value="Genomic_DNA"/>
</dbReference>
<dbReference type="EMBL" id="CH474110">
    <property type="protein sequence ID" value="EDL82845.1"/>
    <property type="molecule type" value="Genomic_DNA"/>
</dbReference>
<dbReference type="RefSeq" id="NP_001102793.1">
    <property type="nucleotide sequence ID" value="NM_001109323.1"/>
</dbReference>
<dbReference type="SMR" id="M0RDU0"/>
<dbReference type="FunCoup" id="M0RDU0">
    <property type="interactions" value="39"/>
</dbReference>
<dbReference type="STRING" id="10116.ENSRNOP00000067799"/>
<dbReference type="PhosphoSitePlus" id="M0RDU0"/>
<dbReference type="PaxDb" id="10116-ENSRNOP00000067799"/>
<dbReference type="Ensembl" id="ENSRNOT00000094156.1">
    <property type="protein sequence ID" value="ENSRNOP00000092499.1"/>
    <property type="gene ID" value="ENSRNOG00000070033.1"/>
</dbReference>
<dbReference type="Ensembl" id="ENSRNOT00000096631.1">
    <property type="protein sequence ID" value="ENSRNOP00000086463.1"/>
    <property type="gene ID" value="ENSRNOG00000070033.1"/>
</dbReference>
<dbReference type="Ensembl" id="ENSRNOT00000096861.1">
    <property type="protein sequence ID" value="ENSRNOP00000092056.1"/>
    <property type="gene ID" value="ENSRNOG00000070033.1"/>
</dbReference>
<dbReference type="Ensembl" id="ENSRNOT00000102135.1">
    <property type="protein sequence ID" value="ENSRNOP00000077834.1"/>
    <property type="gene ID" value="ENSRNOG00000070033.1"/>
</dbReference>
<dbReference type="GeneID" id="501661"/>
<dbReference type="KEGG" id="rno:501661"/>
<dbReference type="AGR" id="RGD:1566014"/>
<dbReference type="AGR" id="RGD:402440179"/>
<dbReference type="CTD" id="8263"/>
<dbReference type="RGD" id="1566014">
    <property type="gene designation" value="F8a1"/>
</dbReference>
<dbReference type="eggNOG" id="ENOG502QQQW">
    <property type="taxonomic scope" value="Eukaryota"/>
</dbReference>
<dbReference type="GeneTree" id="ENSGT00390000016992"/>
<dbReference type="HOGENOM" id="CLU_076185_0_0_1"/>
<dbReference type="InParanoid" id="M0RDU0"/>
<dbReference type="OMA" id="ELWQYAG"/>
<dbReference type="OrthoDB" id="10249246at2759"/>
<dbReference type="PRO" id="PR:M0RDU0"/>
<dbReference type="Proteomes" id="UP000002494">
    <property type="component" value="Chromosome X"/>
</dbReference>
<dbReference type="Proteomes" id="UP000234681">
    <property type="component" value="Chromosome 1"/>
</dbReference>
<dbReference type="Bgee" id="ENSRNOG00000037327">
    <property type="expression patterns" value="Expressed in quadriceps femoris and 20 other cell types or tissues"/>
</dbReference>
<dbReference type="GO" id="GO:0005769">
    <property type="term" value="C:early endosome"/>
    <property type="evidence" value="ECO:0000250"/>
    <property type="project" value="UniProtKB"/>
</dbReference>
<dbReference type="GO" id="GO:0016604">
    <property type="term" value="C:nuclear body"/>
    <property type="evidence" value="ECO:0000250"/>
    <property type="project" value="UniProtKB"/>
</dbReference>
<dbReference type="GO" id="GO:1901799">
    <property type="term" value="P:negative regulation of proteasomal protein catabolic process"/>
    <property type="evidence" value="ECO:0000250"/>
    <property type="project" value="UniProtKB"/>
</dbReference>
<dbReference type="GO" id="GO:0099518">
    <property type="term" value="P:vesicle cytoskeletal trafficking"/>
    <property type="evidence" value="ECO:0000315"/>
    <property type="project" value="UniProtKB"/>
</dbReference>
<dbReference type="FunFam" id="1.25.40.10:FF:000335">
    <property type="entry name" value="Factor VIII intron 22 protein"/>
    <property type="match status" value="1"/>
</dbReference>
<dbReference type="Gene3D" id="1.25.40.10">
    <property type="entry name" value="Tetratricopeptide repeat domain"/>
    <property type="match status" value="1"/>
</dbReference>
<dbReference type="InterPro" id="IPR039494">
    <property type="entry name" value="F8A"/>
</dbReference>
<dbReference type="InterPro" id="IPR011990">
    <property type="entry name" value="TPR-like_helical_dom_sf"/>
</dbReference>
<dbReference type="PANTHER" id="PTHR16797:SF4">
    <property type="entry name" value="40-KDA HUNTINGTIN-ASSOCIATED PROTEIN"/>
    <property type="match status" value="1"/>
</dbReference>
<dbReference type="PANTHER" id="PTHR16797">
    <property type="entry name" value="FACTOR VIII-ASSOCIATED GENE 1"/>
    <property type="match status" value="1"/>
</dbReference>
<dbReference type="SUPFAM" id="SSF48452">
    <property type="entry name" value="TPR-like"/>
    <property type="match status" value="1"/>
</dbReference>
<accession>M0RDU0</accession>
<reference key="1">
    <citation type="journal article" date="2004" name="Nature">
        <title>Genome sequence of the Brown Norway rat yields insights into mammalian evolution.</title>
        <authorList>
            <person name="Gibbs R.A."/>
            <person name="Weinstock G.M."/>
            <person name="Metzker M.L."/>
            <person name="Muzny D.M."/>
            <person name="Sodergren E.J."/>
            <person name="Scherer S."/>
            <person name="Scott G."/>
            <person name="Steffen D."/>
            <person name="Worley K.C."/>
            <person name="Burch P.E."/>
            <person name="Okwuonu G."/>
            <person name="Hines S."/>
            <person name="Lewis L."/>
            <person name="Deramo C."/>
            <person name="Delgado O."/>
            <person name="Dugan-Rocha S."/>
            <person name="Miner G."/>
            <person name="Morgan M."/>
            <person name="Hawes A."/>
            <person name="Gill R."/>
            <person name="Holt R.A."/>
            <person name="Adams M.D."/>
            <person name="Amanatides P.G."/>
            <person name="Baden-Tillson H."/>
            <person name="Barnstead M."/>
            <person name="Chin S."/>
            <person name="Evans C.A."/>
            <person name="Ferriera S."/>
            <person name="Fosler C."/>
            <person name="Glodek A."/>
            <person name="Gu Z."/>
            <person name="Jennings D."/>
            <person name="Kraft C.L."/>
            <person name="Nguyen T."/>
            <person name="Pfannkoch C.M."/>
            <person name="Sitter C."/>
            <person name="Sutton G.G."/>
            <person name="Venter J.C."/>
            <person name="Woodage T."/>
            <person name="Smith D."/>
            <person name="Lee H.-M."/>
            <person name="Gustafson E."/>
            <person name="Cahill P."/>
            <person name="Kana A."/>
            <person name="Doucette-Stamm L."/>
            <person name="Weinstock K."/>
            <person name="Fechtel K."/>
            <person name="Weiss R.B."/>
            <person name="Dunn D.M."/>
            <person name="Green E.D."/>
            <person name="Blakesley R.W."/>
            <person name="Bouffard G.G."/>
            <person name="De Jong P.J."/>
            <person name="Osoegawa K."/>
            <person name="Zhu B."/>
            <person name="Marra M."/>
            <person name="Schein J."/>
            <person name="Bosdet I."/>
            <person name="Fjell C."/>
            <person name="Jones S."/>
            <person name="Krzywinski M."/>
            <person name="Mathewson C."/>
            <person name="Siddiqui A."/>
            <person name="Wye N."/>
            <person name="McPherson J."/>
            <person name="Zhao S."/>
            <person name="Fraser C.M."/>
            <person name="Shetty J."/>
            <person name="Shatsman S."/>
            <person name="Geer K."/>
            <person name="Chen Y."/>
            <person name="Abramzon S."/>
            <person name="Nierman W.C."/>
            <person name="Havlak P.H."/>
            <person name="Chen R."/>
            <person name="Durbin K.J."/>
            <person name="Egan A."/>
            <person name="Ren Y."/>
            <person name="Song X.-Z."/>
            <person name="Li B."/>
            <person name="Liu Y."/>
            <person name="Qin X."/>
            <person name="Cawley S."/>
            <person name="Cooney A.J."/>
            <person name="D'Souza L.M."/>
            <person name="Martin K."/>
            <person name="Wu J.Q."/>
            <person name="Gonzalez-Garay M.L."/>
            <person name="Jackson A.R."/>
            <person name="Kalafus K.J."/>
            <person name="McLeod M.P."/>
            <person name="Milosavljevic A."/>
            <person name="Virk D."/>
            <person name="Volkov A."/>
            <person name="Wheeler D.A."/>
            <person name="Zhang Z."/>
            <person name="Bailey J.A."/>
            <person name="Eichler E.E."/>
            <person name="Tuzun E."/>
            <person name="Birney E."/>
            <person name="Mongin E."/>
            <person name="Ureta-Vidal A."/>
            <person name="Woodwark C."/>
            <person name="Zdobnov E."/>
            <person name="Bork P."/>
            <person name="Suyama M."/>
            <person name="Torrents D."/>
            <person name="Alexandersson M."/>
            <person name="Trask B.J."/>
            <person name="Young J.M."/>
            <person name="Huang H."/>
            <person name="Wang H."/>
            <person name="Xing H."/>
            <person name="Daniels S."/>
            <person name="Gietzen D."/>
            <person name="Schmidt J."/>
            <person name="Stevens K."/>
            <person name="Vitt U."/>
            <person name="Wingrove J."/>
            <person name="Camara F."/>
            <person name="Mar Alba M."/>
            <person name="Abril J.F."/>
            <person name="Guigo R."/>
            <person name="Smit A."/>
            <person name="Dubchak I."/>
            <person name="Rubin E.M."/>
            <person name="Couronne O."/>
            <person name="Poliakov A."/>
            <person name="Huebner N."/>
            <person name="Ganten D."/>
            <person name="Goesele C."/>
            <person name="Hummel O."/>
            <person name="Kreitler T."/>
            <person name="Lee Y.-A."/>
            <person name="Monti J."/>
            <person name="Schulz H."/>
            <person name="Zimdahl H."/>
            <person name="Himmelbauer H."/>
            <person name="Lehrach H."/>
            <person name="Jacob H.J."/>
            <person name="Bromberg S."/>
            <person name="Gullings-Handley J."/>
            <person name="Jensen-Seaman M.I."/>
            <person name="Kwitek A.E."/>
            <person name="Lazar J."/>
            <person name="Pasko D."/>
            <person name="Tonellato P.J."/>
            <person name="Twigger S."/>
            <person name="Ponting C.P."/>
            <person name="Duarte J.M."/>
            <person name="Rice S."/>
            <person name="Goodstadt L."/>
            <person name="Beatson S.A."/>
            <person name="Emes R.D."/>
            <person name="Winter E.E."/>
            <person name="Webber C."/>
            <person name="Brandt P."/>
            <person name="Nyakatura G."/>
            <person name="Adetobi M."/>
            <person name="Chiaromonte F."/>
            <person name="Elnitski L."/>
            <person name="Eswara P."/>
            <person name="Hardison R.C."/>
            <person name="Hou M."/>
            <person name="Kolbe D."/>
            <person name="Makova K."/>
            <person name="Miller W."/>
            <person name="Nekrutenko A."/>
            <person name="Riemer C."/>
            <person name="Schwartz S."/>
            <person name="Taylor J."/>
            <person name="Yang S."/>
            <person name="Zhang Y."/>
            <person name="Lindpaintner K."/>
            <person name="Andrews T.D."/>
            <person name="Caccamo M."/>
            <person name="Clamp M."/>
            <person name="Clarke L."/>
            <person name="Curwen V."/>
            <person name="Durbin R.M."/>
            <person name="Eyras E."/>
            <person name="Searle S.M."/>
            <person name="Cooper G.M."/>
            <person name="Batzoglou S."/>
            <person name="Brudno M."/>
            <person name="Sidow A."/>
            <person name="Stone E.A."/>
            <person name="Payseur B.A."/>
            <person name="Bourque G."/>
            <person name="Lopez-Otin C."/>
            <person name="Puente X.S."/>
            <person name="Chakrabarti K."/>
            <person name="Chatterji S."/>
            <person name="Dewey C."/>
            <person name="Pachter L."/>
            <person name="Bray N."/>
            <person name="Yap V.B."/>
            <person name="Caspi A."/>
            <person name="Tesler G."/>
            <person name="Pevzner P.A."/>
            <person name="Haussler D."/>
            <person name="Roskin K.M."/>
            <person name="Baertsch R."/>
            <person name="Clawson H."/>
            <person name="Furey T.S."/>
            <person name="Hinrichs A.S."/>
            <person name="Karolchik D."/>
            <person name="Kent W.J."/>
            <person name="Rosenbloom K.R."/>
            <person name="Trumbower H."/>
            <person name="Weirauch M."/>
            <person name="Cooper D.N."/>
            <person name="Stenson P.D."/>
            <person name="Ma B."/>
            <person name="Brent M."/>
            <person name="Arumugam M."/>
            <person name="Shteynberg D."/>
            <person name="Copley R.R."/>
            <person name="Taylor M.S."/>
            <person name="Riethman H."/>
            <person name="Mudunuri U."/>
            <person name="Peterson J."/>
            <person name="Guyer M."/>
            <person name="Felsenfeld A."/>
            <person name="Old S."/>
            <person name="Mockrin S."/>
            <person name="Collins F.S."/>
        </authorList>
    </citation>
    <scope>NUCLEOTIDE SEQUENCE [LARGE SCALE GENOMIC DNA]</scope>
    <source>
        <strain>Brown Norway</strain>
    </source>
</reference>
<reference key="2">
    <citation type="submission" date="2005-07" db="EMBL/GenBank/DDBJ databases">
        <authorList>
            <person name="Mural R.J."/>
            <person name="Adams M.D."/>
            <person name="Myers E.W."/>
            <person name="Smith H.O."/>
            <person name="Venter J.C."/>
        </authorList>
    </citation>
    <scope>NUCLEOTIDE SEQUENCE [LARGE SCALE GENOMIC DNA]</scope>
</reference>
<reference key="3">
    <citation type="journal article" date="2001" name="J. Biol. Chem.">
        <title>Isolation of a 40-kDa Huntingtin-associated protein.</title>
        <authorList>
            <person name="Peters M.F."/>
            <person name="Ross C.A."/>
        </authorList>
    </citation>
    <scope>IDENTIFICATION BY MASS SPECTROMETRY</scope>
</reference>
<reference key="4">
    <citation type="journal article" date="2006" name="J. Cell Biol.">
        <title>Huntingtin-HAP40 complex is a novel Rab5 effector that regulates early endosome motility and is up-regulated in Huntington's disease.</title>
        <authorList>
            <person name="Pal A."/>
            <person name="Severin F."/>
            <person name="Lommer B."/>
            <person name="Shevchenko A."/>
            <person name="Zerial M."/>
        </authorList>
    </citation>
    <scope>FUNCTION</scope>
    <scope>IDENTIFICATION BY MASS SPECTROMETRY</scope>
    <scope>SUBUNIT</scope>
    <scope>INTERACTION WITH HTT AND RAB5A</scope>
    <scope>IDENTIFICATION IN A COMPLEX WITH HTT AND RAB5A</scope>
</reference>
<sequence>MAAGSASSLGGGSWPGSEAGDFLARYRQVSNKLKKRFLRKPNVAEAGEQFAQLARELRAQECLPYAAWCQLAVARCQQALFHGPGEALALTEAARLFLRQECDARQRLGCPAAYGEPLQAAASALGAAVRLHLELGQPAAAAALCLELAAALRAVGQPAAAAGHFQRAAQLHLPLMPLAALQALGDAASCQLLARDYTGALAVFTRMQRLAREHGGHPVQQPELPQQLPSVPQPSLPGPQPRPVLGSTLPLPLPPDHAPGSVAQSPGTLGAFADVLVRCEVSRVLLLLLLQPPPAKLLPEHAQTLEKYSWEAFDGHGQDSSGQLPEELFLLLQSLVMAAHEKDTEGIKKLQVEMWPLLTAEQNHLLHLVLQETISPSGQGV</sequence>
<feature type="initiator methionine" description="Removed" evidence="1">
    <location>
        <position position="1"/>
    </location>
</feature>
<feature type="chain" id="PRO_0000448056" description="40-kDa huntingtin-associated protein">
    <location>
        <begin position="2"/>
        <end position="381"/>
    </location>
</feature>
<feature type="region of interest" description="Disordered" evidence="3">
    <location>
        <begin position="213"/>
        <end position="260"/>
    </location>
</feature>
<feature type="short sequence motif" description="Nuclear localization signal" evidence="2">
    <location>
        <begin position="34"/>
        <end position="36"/>
    </location>
</feature>
<feature type="compositionally biased region" description="Low complexity" evidence="3">
    <location>
        <begin position="218"/>
        <end position="230"/>
    </location>
</feature>
<feature type="compositionally biased region" description="Pro residues" evidence="3">
    <location>
        <begin position="231"/>
        <end position="242"/>
    </location>
</feature>
<feature type="modified residue" description="N-acetylalanine" evidence="1">
    <location>
        <position position="2"/>
    </location>
</feature>
<protein>
    <recommendedName>
        <fullName evidence="5">40-kDa huntingtin-associated protein</fullName>
    </recommendedName>
    <alternativeName>
        <fullName>Factor VIII intron 22 protein</fullName>
    </alternativeName>
</protein>
<proteinExistence type="evidence at protein level"/>
<evidence type="ECO:0000250" key="1">
    <source>
        <dbReference type="UniProtKB" id="P23610"/>
    </source>
</evidence>
<evidence type="ECO:0000250" key="2">
    <source>
        <dbReference type="UniProtKB" id="Q00558"/>
    </source>
</evidence>
<evidence type="ECO:0000256" key="3">
    <source>
        <dbReference type="SAM" id="MobiDB-lite"/>
    </source>
</evidence>
<evidence type="ECO:0000269" key="4">
    <source>
    </source>
</evidence>
<evidence type="ECO:0000303" key="5">
    <source>
    </source>
</evidence>
<comment type="function">
    <text evidence="4">RAB5A effector molecule that is involved in vesicular trafficking of early endosomes. Mediates the recruitment of HTT by RAB5A onto early endosomes. The HTT-F8A1/F8A2/F8A3-RAB5A complex stimulates early endosomal interaction with actin filaments and inhibits interaction with microtubules, leading to the reduction of endosome motility.</text>
</comment>
<comment type="subunit">
    <text evidence="4">Interacts with HTT (via C-terminus) (PubMed:16476778). Interacts with RAB5A (PubMed:16476778). Found in a complex with F8A1/F8A2/F8A3, HTT and RAB5A; mediates the recruitment of HTT by RAB5A onto early endosomes (PubMed:16476778).</text>
</comment>
<comment type="subcellular location">
    <subcellularLocation>
        <location evidence="1">Cytoplasm</location>
    </subcellularLocation>
    <subcellularLocation>
        <location evidence="1">Nucleus</location>
    </subcellularLocation>
    <subcellularLocation>
        <location evidence="1">Early endosome</location>
    </subcellularLocation>
    <subcellularLocation>
        <location evidence="2">Nucleus</location>
        <location evidence="2">Nuclear body</location>
    </subcellularLocation>
    <text evidence="1 2">Diffuse presence in the cytoplasm and accumulation in the nucleus (By similarity). In absence of HTT, F8A1/F8A2/F8A3 is concentred in cytoplasm (By similarity). Colocalized with HTT in endosomes (By similarity). In neuron found in intranuclear structures, the intranuclear rodlets (INRs), also known as rodlets of Roncoroni, in association with ubiquitin (By similarity).</text>
</comment>
<gene>
    <name type="primary">F8a1</name>
    <name type="synonym">F8a</name>
    <name evidence="5" type="synonym">Hap40</name>
</gene>
<organism>
    <name type="scientific">Rattus norvegicus</name>
    <name type="common">Rat</name>
    <dbReference type="NCBI Taxonomy" id="10116"/>
    <lineage>
        <taxon>Eukaryota</taxon>
        <taxon>Metazoa</taxon>
        <taxon>Chordata</taxon>
        <taxon>Craniata</taxon>
        <taxon>Vertebrata</taxon>
        <taxon>Euteleostomi</taxon>
        <taxon>Mammalia</taxon>
        <taxon>Eutheria</taxon>
        <taxon>Euarchontoglires</taxon>
        <taxon>Glires</taxon>
        <taxon>Rodentia</taxon>
        <taxon>Myomorpha</taxon>
        <taxon>Muroidea</taxon>
        <taxon>Muridae</taxon>
        <taxon>Murinae</taxon>
        <taxon>Rattus</taxon>
    </lineage>
</organism>
<keyword id="KW-0007">Acetylation</keyword>
<keyword id="KW-0963">Cytoplasm</keyword>
<keyword id="KW-0967">Endosome</keyword>
<keyword id="KW-0539">Nucleus</keyword>
<keyword id="KW-1185">Reference proteome</keyword>
<name>HAP40_RAT</name>